<organism>
    <name type="scientific">Psychromonas ingrahamii (strain DSM 17664 / CCUG 51855 / 37)</name>
    <dbReference type="NCBI Taxonomy" id="357804"/>
    <lineage>
        <taxon>Bacteria</taxon>
        <taxon>Pseudomonadati</taxon>
        <taxon>Pseudomonadota</taxon>
        <taxon>Gammaproteobacteria</taxon>
        <taxon>Alteromonadales</taxon>
        <taxon>Psychromonadaceae</taxon>
        <taxon>Psychromonas</taxon>
    </lineage>
</organism>
<accession>A1SVA7</accession>
<comment type="function">
    <text evidence="1">Catalyzes the attachment of glutamate to tRNA(Glu) in a two-step reaction: glutamate is first activated by ATP to form Glu-AMP and then transferred to the acceptor end of tRNA(Glu).</text>
</comment>
<comment type="catalytic activity">
    <reaction evidence="1">
        <text>tRNA(Glu) + L-glutamate + ATP = L-glutamyl-tRNA(Glu) + AMP + diphosphate</text>
        <dbReference type="Rhea" id="RHEA:23540"/>
        <dbReference type="Rhea" id="RHEA-COMP:9663"/>
        <dbReference type="Rhea" id="RHEA-COMP:9680"/>
        <dbReference type="ChEBI" id="CHEBI:29985"/>
        <dbReference type="ChEBI" id="CHEBI:30616"/>
        <dbReference type="ChEBI" id="CHEBI:33019"/>
        <dbReference type="ChEBI" id="CHEBI:78442"/>
        <dbReference type="ChEBI" id="CHEBI:78520"/>
        <dbReference type="ChEBI" id="CHEBI:456215"/>
        <dbReference type="EC" id="6.1.1.17"/>
    </reaction>
</comment>
<comment type="subunit">
    <text evidence="1">Monomer.</text>
</comment>
<comment type="subcellular location">
    <subcellularLocation>
        <location evidence="1">Cytoplasm</location>
    </subcellularLocation>
</comment>
<comment type="similarity">
    <text evidence="1">Belongs to the class-I aminoacyl-tRNA synthetase family. Glutamate--tRNA ligase type 1 subfamily.</text>
</comment>
<name>SYE_PSYIN</name>
<dbReference type="EC" id="6.1.1.17" evidence="1"/>
<dbReference type="EMBL" id="CP000510">
    <property type="protein sequence ID" value="ABM03422.1"/>
    <property type="molecule type" value="Genomic_DNA"/>
</dbReference>
<dbReference type="RefSeq" id="WP_011769982.1">
    <property type="nucleotide sequence ID" value="NC_008709.1"/>
</dbReference>
<dbReference type="SMR" id="A1SVA7"/>
<dbReference type="STRING" id="357804.Ping_1626"/>
<dbReference type="KEGG" id="pin:Ping_1626"/>
<dbReference type="eggNOG" id="COG0008">
    <property type="taxonomic scope" value="Bacteria"/>
</dbReference>
<dbReference type="HOGENOM" id="CLU_015768_6_3_6"/>
<dbReference type="OrthoDB" id="9807503at2"/>
<dbReference type="Proteomes" id="UP000000639">
    <property type="component" value="Chromosome"/>
</dbReference>
<dbReference type="GO" id="GO:0005829">
    <property type="term" value="C:cytosol"/>
    <property type="evidence" value="ECO:0007669"/>
    <property type="project" value="TreeGrafter"/>
</dbReference>
<dbReference type="GO" id="GO:0005524">
    <property type="term" value="F:ATP binding"/>
    <property type="evidence" value="ECO:0007669"/>
    <property type="project" value="UniProtKB-UniRule"/>
</dbReference>
<dbReference type="GO" id="GO:0004818">
    <property type="term" value="F:glutamate-tRNA ligase activity"/>
    <property type="evidence" value="ECO:0007669"/>
    <property type="project" value="UniProtKB-UniRule"/>
</dbReference>
<dbReference type="GO" id="GO:0000049">
    <property type="term" value="F:tRNA binding"/>
    <property type="evidence" value="ECO:0007669"/>
    <property type="project" value="InterPro"/>
</dbReference>
<dbReference type="GO" id="GO:0008270">
    <property type="term" value="F:zinc ion binding"/>
    <property type="evidence" value="ECO:0007669"/>
    <property type="project" value="InterPro"/>
</dbReference>
<dbReference type="GO" id="GO:0006424">
    <property type="term" value="P:glutamyl-tRNA aminoacylation"/>
    <property type="evidence" value="ECO:0007669"/>
    <property type="project" value="UniProtKB-UniRule"/>
</dbReference>
<dbReference type="CDD" id="cd00808">
    <property type="entry name" value="GluRS_core"/>
    <property type="match status" value="1"/>
</dbReference>
<dbReference type="FunFam" id="3.40.50.620:FF:000007">
    <property type="entry name" value="Glutamate--tRNA ligase"/>
    <property type="match status" value="1"/>
</dbReference>
<dbReference type="Gene3D" id="1.10.10.350">
    <property type="match status" value="1"/>
</dbReference>
<dbReference type="Gene3D" id="3.40.50.620">
    <property type="entry name" value="HUPs"/>
    <property type="match status" value="1"/>
</dbReference>
<dbReference type="HAMAP" id="MF_00022">
    <property type="entry name" value="Glu_tRNA_synth_type1"/>
    <property type="match status" value="1"/>
</dbReference>
<dbReference type="InterPro" id="IPR045462">
    <property type="entry name" value="aa-tRNA-synth_I_cd-bd"/>
</dbReference>
<dbReference type="InterPro" id="IPR020751">
    <property type="entry name" value="aa-tRNA-synth_I_codon-bd_sub2"/>
</dbReference>
<dbReference type="InterPro" id="IPR001412">
    <property type="entry name" value="aa-tRNA-synth_I_CS"/>
</dbReference>
<dbReference type="InterPro" id="IPR008925">
    <property type="entry name" value="aa_tRNA-synth_I_cd-bd_sf"/>
</dbReference>
<dbReference type="InterPro" id="IPR004527">
    <property type="entry name" value="Glu-tRNA-ligase_bac/mito"/>
</dbReference>
<dbReference type="InterPro" id="IPR000924">
    <property type="entry name" value="Glu/Gln-tRNA-synth"/>
</dbReference>
<dbReference type="InterPro" id="IPR020058">
    <property type="entry name" value="Glu/Gln-tRNA-synth_Ib_cat-dom"/>
</dbReference>
<dbReference type="InterPro" id="IPR049940">
    <property type="entry name" value="GluQ/Sye"/>
</dbReference>
<dbReference type="InterPro" id="IPR033910">
    <property type="entry name" value="GluRS_core"/>
</dbReference>
<dbReference type="InterPro" id="IPR014729">
    <property type="entry name" value="Rossmann-like_a/b/a_fold"/>
</dbReference>
<dbReference type="NCBIfam" id="TIGR00464">
    <property type="entry name" value="gltX_bact"/>
    <property type="match status" value="1"/>
</dbReference>
<dbReference type="PANTHER" id="PTHR43311">
    <property type="entry name" value="GLUTAMATE--TRNA LIGASE"/>
    <property type="match status" value="1"/>
</dbReference>
<dbReference type="PANTHER" id="PTHR43311:SF2">
    <property type="entry name" value="GLUTAMATE--TRNA LIGASE, MITOCHONDRIAL-RELATED"/>
    <property type="match status" value="1"/>
</dbReference>
<dbReference type="Pfam" id="PF19269">
    <property type="entry name" value="Anticodon_2"/>
    <property type="match status" value="1"/>
</dbReference>
<dbReference type="Pfam" id="PF00749">
    <property type="entry name" value="tRNA-synt_1c"/>
    <property type="match status" value="1"/>
</dbReference>
<dbReference type="PRINTS" id="PR00987">
    <property type="entry name" value="TRNASYNTHGLU"/>
</dbReference>
<dbReference type="SUPFAM" id="SSF48163">
    <property type="entry name" value="An anticodon-binding domain of class I aminoacyl-tRNA synthetases"/>
    <property type="match status" value="1"/>
</dbReference>
<dbReference type="SUPFAM" id="SSF52374">
    <property type="entry name" value="Nucleotidylyl transferase"/>
    <property type="match status" value="1"/>
</dbReference>
<dbReference type="PROSITE" id="PS00178">
    <property type="entry name" value="AA_TRNA_LIGASE_I"/>
    <property type="match status" value="1"/>
</dbReference>
<proteinExistence type="inferred from homology"/>
<sequence>MKVKTRFAPSPTGFLHVGGARTALYSWLHAKSKGGEFVLRIEDTDIARSTQEAVDAILEGMTWMGLTWDEGPYYQTKRFDRYKEIIAKMLSDGTAYKCYCTKERVNELREAQEKAGESPRYDSKCRGLAPQNTDAPYVIRFKNPKEGSVKFDDHVRGPIEFSNTELDDLIIQRTDGTPTYNFCVVVDDWDMGITYVVRGEDHINNTPRQINILKALGAPLPEYAHVAMILGDDGAKLSKRHGAVSVMQFRDEGYLPEALKNYLVRLGWSHGDQEIFSEKEMIELFSLDAINKAPSAFNTEKLLWLNQHYIKSLDPAYIAQHLAWHMTNQKIDMTNGPALPEIVSALSERAKTLVELATTSRYFFEEYEDFDATAAKKHLRPVAEDALVLVKQKLQTSDDWTDPALHQIINDTANELGVGMGKVGMPLRVAITGGGQSPSLDVTLRLIGKERSIKRIDRALEFIAARVAAS</sequence>
<evidence type="ECO:0000255" key="1">
    <source>
        <dbReference type="HAMAP-Rule" id="MF_00022"/>
    </source>
</evidence>
<keyword id="KW-0030">Aminoacyl-tRNA synthetase</keyword>
<keyword id="KW-0067">ATP-binding</keyword>
<keyword id="KW-0963">Cytoplasm</keyword>
<keyword id="KW-0436">Ligase</keyword>
<keyword id="KW-0547">Nucleotide-binding</keyword>
<keyword id="KW-0648">Protein biosynthesis</keyword>
<keyword id="KW-1185">Reference proteome</keyword>
<feature type="chain" id="PRO_1000001944" description="Glutamate--tRNA ligase">
    <location>
        <begin position="1"/>
        <end position="470"/>
    </location>
</feature>
<feature type="short sequence motif" description="'HIGH' region" evidence="1">
    <location>
        <begin position="9"/>
        <end position="19"/>
    </location>
</feature>
<feature type="short sequence motif" description="'KMSKS' region" evidence="1">
    <location>
        <begin position="236"/>
        <end position="240"/>
    </location>
</feature>
<feature type="binding site" evidence="1">
    <location>
        <position position="239"/>
    </location>
    <ligand>
        <name>ATP</name>
        <dbReference type="ChEBI" id="CHEBI:30616"/>
    </ligand>
</feature>
<gene>
    <name evidence="1" type="primary">gltX</name>
    <name type="ordered locus">Ping_1626</name>
</gene>
<protein>
    <recommendedName>
        <fullName evidence="1">Glutamate--tRNA ligase</fullName>
        <ecNumber evidence="1">6.1.1.17</ecNumber>
    </recommendedName>
    <alternativeName>
        <fullName evidence="1">Glutamyl-tRNA synthetase</fullName>
        <shortName evidence="1">GluRS</shortName>
    </alternativeName>
</protein>
<reference key="1">
    <citation type="journal article" date="2008" name="BMC Genomics">
        <title>Genomics of an extreme psychrophile, Psychromonas ingrahamii.</title>
        <authorList>
            <person name="Riley M."/>
            <person name="Staley J.T."/>
            <person name="Danchin A."/>
            <person name="Wang T.Z."/>
            <person name="Brettin T.S."/>
            <person name="Hauser L.J."/>
            <person name="Land M.L."/>
            <person name="Thompson L.S."/>
        </authorList>
    </citation>
    <scope>NUCLEOTIDE SEQUENCE [LARGE SCALE GENOMIC DNA]</scope>
    <source>
        <strain>DSM 17664 / CCUG 51855 / 37</strain>
    </source>
</reference>